<name>COABC_ECOL6</name>
<accession>P0ABQ1</accession>
<accession>P24285</accession>
<accession>P76718</accession>
<evidence type="ECO:0000250" key="1"/>
<evidence type="ECO:0000255" key="2">
    <source>
        <dbReference type="HAMAP-Rule" id="MF_02225"/>
    </source>
</evidence>
<evidence type="ECO:0000305" key="3"/>
<proteinExistence type="inferred from homology"/>
<gene>
    <name evidence="2" type="primary">coaBC</name>
    <name type="synonym">dfp</name>
    <name type="ordered locus">c4463</name>
</gene>
<comment type="function">
    <text evidence="2">Catalyzes two sequential steps in the biosynthesis of coenzyme A. In the first step cysteine is conjugated to 4'-phosphopantothenate to form 4-phosphopantothenoylcysteine. In the second step the latter compound is decarboxylated to form 4'-phosphopantotheine.</text>
</comment>
<comment type="catalytic activity">
    <reaction evidence="2">
        <text>N-[(R)-4-phosphopantothenoyl]-L-cysteine + H(+) = (R)-4'-phosphopantetheine + CO2</text>
        <dbReference type="Rhea" id="RHEA:16793"/>
        <dbReference type="ChEBI" id="CHEBI:15378"/>
        <dbReference type="ChEBI" id="CHEBI:16526"/>
        <dbReference type="ChEBI" id="CHEBI:59458"/>
        <dbReference type="ChEBI" id="CHEBI:61723"/>
        <dbReference type="EC" id="4.1.1.36"/>
    </reaction>
</comment>
<comment type="catalytic activity">
    <reaction evidence="2">
        <text>(R)-4'-phosphopantothenate + L-cysteine + CTP = N-[(R)-4-phosphopantothenoyl]-L-cysteine + CMP + diphosphate + H(+)</text>
        <dbReference type="Rhea" id="RHEA:19397"/>
        <dbReference type="ChEBI" id="CHEBI:10986"/>
        <dbReference type="ChEBI" id="CHEBI:15378"/>
        <dbReference type="ChEBI" id="CHEBI:33019"/>
        <dbReference type="ChEBI" id="CHEBI:35235"/>
        <dbReference type="ChEBI" id="CHEBI:37563"/>
        <dbReference type="ChEBI" id="CHEBI:59458"/>
        <dbReference type="ChEBI" id="CHEBI:60377"/>
        <dbReference type="EC" id="6.3.2.5"/>
    </reaction>
</comment>
<comment type="cofactor">
    <cofactor evidence="2">
        <name>Mg(2+)</name>
        <dbReference type="ChEBI" id="CHEBI:18420"/>
    </cofactor>
</comment>
<comment type="cofactor">
    <cofactor evidence="2">
        <name>FMN</name>
        <dbReference type="ChEBI" id="CHEBI:58210"/>
    </cofactor>
    <text evidence="2">Binds 1 FMN per subunit.</text>
</comment>
<comment type="pathway">
    <text evidence="2">Cofactor biosynthesis; coenzyme A biosynthesis; CoA from (R)-pantothenate: step 2/5.</text>
</comment>
<comment type="pathway">
    <text evidence="2">Cofactor biosynthesis; coenzyme A biosynthesis; CoA from (R)-pantothenate: step 3/5.</text>
</comment>
<comment type="similarity">
    <text evidence="2">In the N-terminal section; belongs to the HFCD (homo-oligomeric flavin containing Cys decarboxylase) superfamily.</text>
</comment>
<comment type="similarity">
    <text evidence="2">In the C-terminal section; belongs to the PPC synthetase family.</text>
</comment>
<comment type="sequence caution" evidence="3">
    <conflict type="erroneous initiation">
        <sequence resource="EMBL-CDS" id="AAN82899"/>
    </conflict>
</comment>
<sequence>MSLAGKKIVLGVSGGIAAYKTPELVRRLRDRGADVRVAMTEAAKAFITPLSLQAVSGYPVSDSLLDPAAEAAMGHIELGKWADLVILAPATADLIARVAAGMANDLVSTICLATPAPVAVLPAMNQQMYRAAATQHNLEVLASRGLLIWGPDSGSQACGDIGPGRMLDPLTIVDMAVAHFSPVNDLKHLNIMITAGPTREPLDPVRYISNHSSGKMGFAIAAAAARRGANVTLVSGPVSLPTPPFVKRVDVMTALEMEAAVNASVQQQNIFIGCAAVADYRAATVAPEKIKKQATQGDELTIKMVKNPDIVAGVAALKDHRPYVVGFAAETNNVEEYARQKRIRKNLDLICANDVSQPTQGFNSDNNALHLFWQDGDKVLPLERKELLGQLLLDEIVTRYDEKNRR</sequence>
<keyword id="KW-0210">Decarboxylase</keyword>
<keyword id="KW-0285">Flavoprotein</keyword>
<keyword id="KW-0288">FMN</keyword>
<keyword id="KW-0436">Ligase</keyword>
<keyword id="KW-0456">Lyase</keyword>
<keyword id="KW-0460">Magnesium</keyword>
<keyword id="KW-0479">Metal-binding</keyword>
<keyword id="KW-0511">Multifunctional enzyme</keyword>
<keyword id="KW-1185">Reference proteome</keyword>
<reference key="1">
    <citation type="journal article" date="2002" name="Proc. Natl. Acad. Sci. U.S.A.">
        <title>Extensive mosaic structure revealed by the complete genome sequence of uropathogenic Escherichia coli.</title>
        <authorList>
            <person name="Welch R.A."/>
            <person name="Burland V."/>
            <person name="Plunkett G. III"/>
            <person name="Redford P."/>
            <person name="Roesch P."/>
            <person name="Rasko D."/>
            <person name="Buckles E.L."/>
            <person name="Liou S.-R."/>
            <person name="Boutin A."/>
            <person name="Hackett J."/>
            <person name="Stroud D."/>
            <person name="Mayhew G.F."/>
            <person name="Rose D.J."/>
            <person name="Zhou S."/>
            <person name="Schwartz D.C."/>
            <person name="Perna N.T."/>
            <person name="Mobley H.L.T."/>
            <person name="Donnenberg M.S."/>
            <person name="Blattner F.R."/>
        </authorList>
    </citation>
    <scope>NUCLEOTIDE SEQUENCE [LARGE SCALE GENOMIC DNA]</scope>
    <source>
        <strain>CFT073 / ATCC 700928 / UPEC</strain>
    </source>
</reference>
<dbReference type="EC" id="4.1.1.36" evidence="2"/>
<dbReference type="EC" id="6.3.2.5" evidence="2"/>
<dbReference type="EMBL" id="AE014075">
    <property type="protein sequence ID" value="AAN82899.1"/>
    <property type="status" value="ALT_INIT"/>
    <property type="molecule type" value="Genomic_DNA"/>
</dbReference>
<dbReference type="RefSeq" id="WP_000050139.1">
    <property type="nucleotide sequence ID" value="NZ_CP051263.1"/>
</dbReference>
<dbReference type="SMR" id="P0ABQ1"/>
<dbReference type="STRING" id="199310.c4463"/>
<dbReference type="KEGG" id="ecc:c4463"/>
<dbReference type="eggNOG" id="COG0452">
    <property type="taxonomic scope" value="Bacteria"/>
</dbReference>
<dbReference type="HOGENOM" id="CLU_033319_0_1_6"/>
<dbReference type="UniPathway" id="UPA00241">
    <property type="reaction ID" value="UER00353"/>
</dbReference>
<dbReference type="UniPathway" id="UPA00241">
    <property type="reaction ID" value="UER00354"/>
</dbReference>
<dbReference type="Proteomes" id="UP000001410">
    <property type="component" value="Chromosome"/>
</dbReference>
<dbReference type="GO" id="GO:0071513">
    <property type="term" value="C:phosphopantothenoylcysteine decarboxylase complex"/>
    <property type="evidence" value="ECO:0007669"/>
    <property type="project" value="TreeGrafter"/>
</dbReference>
<dbReference type="GO" id="GO:0010181">
    <property type="term" value="F:FMN binding"/>
    <property type="evidence" value="ECO:0007669"/>
    <property type="project" value="UniProtKB-UniRule"/>
</dbReference>
<dbReference type="GO" id="GO:0046872">
    <property type="term" value="F:metal ion binding"/>
    <property type="evidence" value="ECO:0007669"/>
    <property type="project" value="UniProtKB-KW"/>
</dbReference>
<dbReference type="GO" id="GO:0004632">
    <property type="term" value="F:phosphopantothenate--cysteine ligase activity"/>
    <property type="evidence" value="ECO:0007669"/>
    <property type="project" value="UniProtKB-UniRule"/>
</dbReference>
<dbReference type="GO" id="GO:0004633">
    <property type="term" value="F:phosphopantothenoylcysteine decarboxylase activity"/>
    <property type="evidence" value="ECO:0007669"/>
    <property type="project" value="UniProtKB-UniRule"/>
</dbReference>
<dbReference type="GO" id="GO:0015937">
    <property type="term" value="P:coenzyme A biosynthetic process"/>
    <property type="evidence" value="ECO:0007669"/>
    <property type="project" value="UniProtKB-UniRule"/>
</dbReference>
<dbReference type="GO" id="GO:0015941">
    <property type="term" value="P:pantothenate catabolic process"/>
    <property type="evidence" value="ECO:0007669"/>
    <property type="project" value="InterPro"/>
</dbReference>
<dbReference type="FunFam" id="3.40.50.10300:FF:000001">
    <property type="entry name" value="Coenzyme A biosynthesis bifunctional protein CoaBC"/>
    <property type="match status" value="1"/>
</dbReference>
<dbReference type="FunFam" id="3.40.50.1950:FF:000002">
    <property type="entry name" value="Coenzyme A biosynthesis bifunctional protein CoaBC"/>
    <property type="match status" value="1"/>
</dbReference>
<dbReference type="Gene3D" id="3.40.50.10300">
    <property type="entry name" value="CoaB-like"/>
    <property type="match status" value="1"/>
</dbReference>
<dbReference type="Gene3D" id="3.40.50.1950">
    <property type="entry name" value="Flavin prenyltransferase-like"/>
    <property type="match status" value="1"/>
</dbReference>
<dbReference type="HAMAP" id="MF_02225">
    <property type="entry name" value="CoaBC"/>
    <property type="match status" value="1"/>
</dbReference>
<dbReference type="InterPro" id="IPR035929">
    <property type="entry name" value="CoaB-like_sf"/>
</dbReference>
<dbReference type="InterPro" id="IPR005252">
    <property type="entry name" value="CoaBC"/>
</dbReference>
<dbReference type="InterPro" id="IPR007085">
    <property type="entry name" value="DNA/pantothenate-metab_flavo_C"/>
</dbReference>
<dbReference type="InterPro" id="IPR036551">
    <property type="entry name" value="Flavin_trans-like"/>
</dbReference>
<dbReference type="InterPro" id="IPR003382">
    <property type="entry name" value="Flavoprotein"/>
</dbReference>
<dbReference type="NCBIfam" id="TIGR00521">
    <property type="entry name" value="coaBC_dfp"/>
    <property type="match status" value="1"/>
</dbReference>
<dbReference type="PANTHER" id="PTHR14359">
    <property type="entry name" value="HOMO-OLIGOMERIC FLAVIN CONTAINING CYS DECARBOXYLASE FAMILY"/>
    <property type="match status" value="1"/>
</dbReference>
<dbReference type="PANTHER" id="PTHR14359:SF6">
    <property type="entry name" value="PHOSPHOPANTOTHENOYLCYSTEINE DECARBOXYLASE"/>
    <property type="match status" value="1"/>
</dbReference>
<dbReference type="Pfam" id="PF04127">
    <property type="entry name" value="DFP"/>
    <property type="match status" value="1"/>
</dbReference>
<dbReference type="Pfam" id="PF02441">
    <property type="entry name" value="Flavoprotein"/>
    <property type="match status" value="1"/>
</dbReference>
<dbReference type="SUPFAM" id="SSF102645">
    <property type="entry name" value="CoaB-like"/>
    <property type="match status" value="1"/>
</dbReference>
<dbReference type="SUPFAM" id="SSF52507">
    <property type="entry name" value="Homo-oligomeric flavin-containing Cys decarboxylases, HFCD"/>
    <property type="match status" value="1"/>
</dbReference>
<feature type="initiator methionine" description="Removed" evidence="1">
    <location>
        <position position="1"/>
    </location>
</feature>
<feature type="chain" id="PRO_0000182023" description="Coenzyme A biosynthesis bifunctional protein CoaBC">
    <location>
        <begin position="2"/>
        <end position="406"/>
    </location>
</feature>
<feature type="region of interest" description="Phosphopantothenoylcysteine decarboxylase" evidence="2">
    <location>
        <begin position="2"/>
        <end position="190"/>
    </location>
</feature>
<feature type="region of interest" description="Phosphopantothenate--cysteine ligase" evidence="2">
    <location>
        <begin position="191"/>
        <end position="406"/>
    </location>
</feature>
<feature type="active site" description="Proton donor" evidence="2">
    <location>
        <position position="158"/>
    </location>
</feature>
<feature type="binding site" evidence="2">
    <location>
        <begin position="273"/>
        <end position="275"/>
    </location>
    <ligand>
        <name>CTP</name>
        <dbReference type="ChEBI" id="CHEBI:37563"/>
    </ligand>
</feature>
<feature type="binding site" evidence="2">
    <location>
        <position position="279"/>
    </location>
    <ligand>
        <name>CTP</name>
        <dbReference type="ChEBI" id="CHEBI:37563"/>
    </ligand>
</feature>
<feature type="binding site" evidence="2">
    <location>
        <position position="289"/>
    </location>
    <ligand>
        <name>CTP</name>
        <dbReference type="ChEBI" id="CHEBI:37563"/>
    </ligand>
</feature>
<feature type="binding site" evidence="2">
    <location>
        <begin position="308"/>
        <end position="311"/>
    </location>
    <ligand>
        <name>CTP</name>
        <dbReference type="ChEBI" id="CHEBI:37563"/>
    </ligand>
</feature>
<feature type="binding site" evidence="2">
    <location>
        <position position="327"/>
    </location>
    <ligand>
        <name>CTP</name>
        <dbReference type="ChEBI" id="CHEBI:37563"/>
    </ligand>
</feature>
<feature type="binding site" evidence="2">
    <location>
        <position position="341"/>
    </location>
    <ligand>
        <name>CTP</name>
        <dbReference type="ChEBI" id="CHEBI:37563"/>
    </ligand>
</feature>
<feature type="binding site" evidence="2">
    <location>
        <position position="345"/>
    </location>
    <ligand>
        <name>CTP</name>
        <dbReference type="ChEBI" id="CHEBI:37563"/>
    </ligand>
</feature>
<organism>
    <name type="scientific">Escherichia coli O6:H1 (strain CFT073 / ATCC 700928 / UPEC)</name>
    <dbReference type="NCBI Taxonomy" id="199310"/>
    <lineage>
        <taxon>Bacteria</taxon>
        <taxon>Pseudomonadati</taxon>
        <taxon>Pseudomonadota</taxon>
        <taxon>Gammaproteobacteria</taxon>
        <taxon>Enterobacterales</taxon>
        <taxon>Enterobacteriaceae</taxon>
        <taxon>Escherichia</taxon>
    </lineage>
</organism>
<protein>
    <recommendedName>
        <fullName evidence="2">Coenzyme A biosynthesis bifunctional protein CoaBC</fullName>
    </recommendedName>
    <alternativeName>
        <fullName evidence="2">DNA/pantothenate metabolism flavoprotein</fullName>
    </alternativeName>
    <alternativeName>
        <fullName evidence="2">Phosphopantothenoylcysteine synthetase/decarboxylase</fullName>
        <shortName evidence="2">PPCS-PPCDC</shortName>
    </alternativeName>
    <domain>
        <recommendedName>
            <fullName evidence="2">Phosphopantothenoylcysteine decarboxylase</fullName>
            <shortName evidence="2">PPC decarboxylase</shortName>
            <shortName evidence="2">PPC-DC</shortName>
            <ecNumber evidence="2">4.1.1.36</ecNumber>
        </recommendedName>
        <alternativeName>
            <fullName evidence="2">CoaC</fullName>
        </alternativeName>
    </domain>
    <domain>
        <recommendedName>
            <fullName evidence="2">Phosphopantothenate--cysteine ligase</fullName>
            <ecNumber evidence="2">6.3.2.5</ecNumber>
        </recommendedName>
        <alternativeName>
            <fullName evidence="2">CoaB</fullName>
        </alternativeName>
        <alternativeName>
            <fullName evidence="2">Phosphopantothenoylcysteine synthetase</fullName>
            <shortName evidence="2">PPC synthetase</shortName>
            <shortName evidence="2">PPC-S</shortName>
        </alternativeName>
    </domain>
</protein>